<sequence>MSSFTSKFADELIANAAYIGTPGKGILAADESTGTIGKRLASINVENVESNRRALRELLFTTPGALPCLSGVILFEETLYQKSSDGTPFVDMLKSAGVLPGIKVDKGTVELAGTNGETTTQGLDGLGDRCKKYYEAGARFAKWRAVLKIGVNEPSQLAIHENAYGLARYAVICQENGLVPIVEPEILVDGSHDIQKCAAVTERVLAACYKALSDHHVLLEGTLLKPNMVTPGSESAKVAPEVIAEHTVRALQRTVPAAVPAIVFLSGGQSEEEATRNLNAMNQLKTKKPWSLSFSFGRALQQSTLKTWGGKEENVKKAQEAFLVRCKANSEATLGAYKGDAKLGEGAAESLHVKDYKY</sequence>
<proteinExistence type="evidence at protein level"/>
<gene>
    <name evidence="11" type="primary">FBA6</name>
    <name evidence="13" type="ordered locus">At2g36460</name>
</gene>
<name>ALFC6_ARATH</name>
<feature type="initiator methionine" description="Removed" evidence="3">
    <location>
        <position position="1"/>
    </location>
</feature>
<feature type="chain" id="PRO_0000437240" description="Fructose-bisphosphate aldolase 6, cytosolic">
    <location>
        <begin position="2"/>
        <end position="358"/>
    </location>
</feature>
<feature type="active site" description="Proton acceptor" evidence="1">
    <location>
        <position position="183"/>
    </location>
</feature>
<feature type="active site" description="Schiff-base intermediate with dihydroxyacetone-P" evidence="1">
    <location>
        <position position="225"/>
    </location>
</feature>
<feature type="binding site" evidence="1">
    <location>
        <position position="39"/>
    </location>
    <ligand>
        <name>substrate</name>
    </ligand>
</feature>
<feature type="binding site" evidence="1">
    <location>
        <begin position="266"/>
        <end position="268"/>
    </location>
    <ligand>
        <name>substrate</name>
    </ligand>
</feature>
<feature type="binding site" evidence="1">
    <location>
        <position position="298"/>
    </location>
    <ligand>
        <name>substrate</name>
    </ligand>
</feature>
<feature type="site" description="Necessary for preference for fructose 1,6-bisphosphate over fructose 1-phosphate" evidence="1">
    <location>
        <position position="358"/>
    </location>
</feature>
<feature type="modified residue" description="N-acetylserine" evidence="3">
    <location>
        <position position="2"/>
    </location>
</feature>
<feature type="modified residue" description="S-glutathionyl cysteine; transient" evidence="7">
    <location>
        <position position="68"/>
    </location>
</feature>
<feature type="modified residue" description="S-glutathionyl cysteine; transient; alternate" evidence="7">
    <location>
        <position position="173"/>
    </location>
</feature>
<feature type="modified residue" description="S-nitrosocysteine; transient; alternate" evidence="7">
    <location>
        <position position="173"/>
    </location>
</feature>
<feature type="modified residue" description="Phosphoserine" evidence="3">
    <location>
        <position position="350"/>
    </location>
</feature>
<feature type="modified residue" description="N6,N6,N6-trimethyllysine" evidence="4">
    <location>
        <position position="354"/>
    </location>
</feature>
<feature type="helix" evidence="15">
    <location>
        <begin position="9"/>
        <end position="19"/>
    </location>
</feature>
<feature type="strand" evidence="15">
    <location>
        <begin position="25"/>
        <end position="29"/>
    </location>
</feature>
<feature type="helix" evidence="15">
    <location>
        <begin position="33"/>
        <end position="41"/>
    </location>
</feature>
<feature type="turn" evidence="15">
    <location>
        <begin position="42"/>
        <end position="44"/>
    </location>
</feature>
<feature type="helix" evidence="15">
    <location>
        <begin position="49"/>
        <end position="60"/>
    </location>
</feature>
<feature type="turn" evidence="15">
    <location>
        <begin position="63"/>
        <end position="65"/>
    </location>
</feature>
<feature type="helix" evidence="15">
    <location>
        <begin position="66"/>
        <end position="68"/>
    </location>
</feature>
<feature type="strand" evidence="15">
    <location>
        <begin position="69"/>
        <end position="74"/>
    </location>
</feature>
<feature type="helix" evidence="15">
    <location>
        <begin position="76"/>
        <end position="79"/>
    </location>
</feature>
<feature type="helix" evidence="15">
    <location>
        <begin position="89"/>
        <end position="95"/>
    </location>
</feature>
<feature type="strand" evidence="15">
    <location>
        <begin position="99"/>
        <end position="103"/>
    </location>
</feature>
<feature type="strand" evidence="15">
    <location>
        <begin position="108"/>
        <end position="110"/>
    </location>
</feature>
<feature type="strand" evidence="15">
    <location>
        <begin position="114"/>
        <end position="116"/>
    </location>
</feature>
<feature type="strand" evidence="15">
    <location>
        <begin position="118"/>
        <end position="120"/>
    </location>
</feature>
<feature type="helix" evidence="15">
    <location>
        <begin position="126"/>
        <end position="135"/>
    </location>
</feature>
<feature type="strand" evidence="15">
    <location>
        <begin position="140"/>
        <end position="147"/>
    </location>
</feature>
<feature type="strand" evidence="15">
    <location>
        <begin position="150"/>
        <end position="152"/>
    </location>
</feature>
<feature type="helix" evidence="15">
    <location>
        <begin position="156"/>
        <end position="175"/>
    </location>
</feature>
<feature type="strand" evidence="15">
    <location>
        <begin position="179"/>
        <end position="186"/>
    </location>
</feature>
<feature type="helix" evidence="15">
    <location>
        <begin position="194"/>
        <end position="214"/>
    </location>
</feature>
<feature type="helix" evidence="15">
    <location>
        <begin position="219"/>
        <end position="221"/>
    </location>
</feature>
<feature type="helix" evidence="15">
    <location>
        <begin position="240"/>
        <end position="252"/>
    </location>
</feature>
<feature type="strand" evidence="15">
    <location>
        <begin position="261"/>
        <end position="264"/>
    </location>
</feature>
<feature type="helix" evidence="15">
    <location>
        <begin position="271"/>
        <end position="282"/>
    </location>
</feature>
<feature type="strand" evidence="15">
    <location>
        <begin position="290"/>
        <end position="297"/>
    </location>
</feature>
<feature type="helix" evidence="15">
    <location>
        <begin position="298"/>
        <end position="307"/>
    </location>
</feature>
<feature type="strand" evidence="14">
    <location>
        <begin position="309"/>
        <end position="311"/>
    </location>
</feature>
<feature type="helix" evidence="15">
    <location>
        <begin position="312"/>
        <end position="314"/>
    </location>
</feature>
<feature type="helix" evidence="15">
    <location>
        <begin position="315"/>
        <end position="333"/>
    </location>
</feature>
<reference key="1">
    <citation type="journal article" date="1999" name="Nature">
        <title>Sequence and analysis of chromosome 2 of the plant Arabidopsis thaliana.</title>
        <authorList>
            <person name="Lin X."/>
            <person name="Kaul S."/>
            <person name="Rounsley S.D."/>
            <person name="Shea T.P."/>
            <person name="Benito M.-I."/>
            <person name="Town C.D."/>
            <person name="Fujii C.Y."/>
            <person name="Mason T.M."/>
            <person name="Bowman C.L."/>
            <person name="Barnstead M.E."/>
            <person name="Feldblyum T.V."/>
            <person name="Buell C.R."/>
            <person name="Ketchum K.A."/>
            <person name="Lee J.J."/>
            <person name="Ronning C.M."/>
            <person name="Koo H.L."/>
            <person name="Moffat K.S."/>
            <person name="Cronin L.A."/>
            <person name="Shen M."/>
            <person name="Pai G."/>
            <person name="Van Aken S."/>
            <person name="Umayam L."/>
            <person name="Tallon L.J."/>
            <person name="Gill J.E."/>
            <person name="Adams M.D."/>
            <person name="Carrera A.J."/>
            <person name="Creasy T.H."/>
            <person name="Goodman H.M."/>
            <person name="Somerville C.R."/>
            <person name="Copenhaver G.P."/>
            <person name="Preuss D."/>
            <person name="Nierman W.C."/>
            <person name="White O."/>
            <person name="Eisen J.A."/>
            <person name="Salzberg S.L."/>
            <person name="Fraser C.M."/>
            <person name="Venter J.C."/>
        </authorList>
    </citation>
    <scope>NUCLEOTIDE SEQUENCE [LARGE SCALE GENOMIC DNA]</scope>
    <source>
        <strain>cv. Columbia</strain>
    </source>
</reference>
<reference key="2">
    <citation type="journal article" date="2017" name="Plant J.">
        <title>Araport11: a complete reannotation of the Arabidopsis thaliana reference genome.</title>
        <authorList>
            <person name="Cheng C.Y."/>
            <person name="Krishnakumar V."/>
            <person name="Chan A.P."/>
            <person name="Thibaud-Nissen F."/>
            <person name="Schobel S."/>
            <person name="Town C.D."/>
        </authorList>
    </citation>
    <scope>GENOME REANNOTATION</scope>
    <source>
        <strain>cv. Columbia</strain>
    </source>
</reference>
<reference key="3">
    <citation type="journal article" date="2003" name="Science">
        <title>Empirical analysis of transcriptional activity in the Arabidopsis genome.</title>
        <authorList>
            <person name="Yamada K."/>
            <person name="Lim J."/>
            <person name="Dale J.M."/>
            <person name="Chen H."/>
            <person name="Shinn P."/>
            <person name="Palm C.J."/>
            <person name="Southwick A.M."/>
            <person name="Wu H.C."/>
            <person name="Kim C.J."/>
            <person name="Nguyen M."/>
            <person name="Pham P.K."/>
            <person name="Cheuk R.F."/>
            <person name="Karlin-Newmann G."/>
            <person name="Liu S.X."/>
            <person name="Lam B."/>
            <person name="Sakano H."/>
            <person name="Wu T."/>
            <person name="Yu G."/>
            <person name="Miranda M."/>
            <person name="Quach H.L."/>
            <person name="Tripp M."/>
            <person name="Chang C.H."/>
            <person name="Lee J.M."/>
            <person name="Toriumi M.J."/>
            <person name="Chan M.M."/>
            <person name="Tang C.C."/>
            <person name="Onodera C.S."/>
            <person name="Deng J.M."/>
            <person name="Akiyama K."/>
            <person name="Ansari Y."/>
            <person name="Arakawa T."/>
            <person name="Banh J."/>
            <person name="Banno F."/>
            <person name="Bowser L."/>
            <person name="Brooks S.Y."/>
            <person name="Carninci P."/>
            <person name="Chao Q."/>
            <person name="Choy N."/>
            <person name="Enju A."/>
            <person name="Goldsmith A.D."/>
            <person name="Gurjal M."/>
            <person name="Hansen N.F."/>
            <person name="Hayashizaki Y."/>
            <person name="Johnson-Hopson C."/>
            <person name="Hsuan V.W."/>
            <person name="Iida K."/>
            <person name="Karnes M."/>
            <person name="Khan S."/>
            <person name="Koesema E."/>
            <person name="Ishida J."/>
            <person name="Jiang P.X."/>
            <person name="Jones T."/>
            <person name="Kawai J."/>
            <person name="Kamiya A."/>
            <person name="Meyers C."/>
            <person name="Nakajima M."/>
            <person name="Narusaka M."/>
            <person name="Seki M."/>
            <person name="Sakurai T."/>
            <person name="Satou M."/>
            <person name="Tamse R."/>
            <person name="Vaysberg M."/>
            <person name="Wallender E.K."/>
            <person name="Wong C."/>
            <person name="Yamamura Y."/>
            <person name="Yuan S."/>
            <person name="Shinozaki K."/>
            <person name="Davis R.W."/>
            <person name="Theologis A."/>
            <person name="Ecker J.R."/>
        </authorList>
    </citation>
    <scope>NUCLEOTIDE SEQUENCE [LARGE SCALE MRNA]</scope>
    <source>
        <strain>cv. Columbia</strain>
    </source>
</reference>
<reference key="4">
    <citation type="submission" date="2006-07" db="EMBL/GenBank/DDBJ databases">
        <title>Large-scale analysis of RIKEN Arabidopsis full-length (RAFL) cDNAs.</title>
        <authorList>
            <person name="Totoki Y."/>
            <person name="Seki M."/>
            <person name="Ishida J."/>
            <person name="Nakajima M."/>
            <person name="Enju A."/>
            <person name="Kamiya A."/>
            <person name="Narusaka M."/>
            <person name="Shin-i T."/>
            <person name="Nakagawa M."/>
            <person name="Sakamoto N."/>
            <person name="Oishi K."/>
            <person name="Kohara Y."/>
            <person name="Kobayashi M."/>
            <person name="Toyoda A."/>
            <person name="Sakaki Y."/>
            <person name="Sakurai T."/>
            <person name="Iida K."/>
            <person name="Akiyama K."/>
            <person name="Satou M."/>
            <person name="Toyoda T."/>
            <person name="Konagaya A."/>
            <person name="Carninci P."/>
            <person name="Kawai J."/>
            <person name="Hayashizaki Y."/>
            <person name="Shinozaki K."/>
        </authorList>
    </citation>
    <scope>NUCLEOTIDE SEQUENCE [LARGE SCALE MRNA]</scope>
    <source>
        <strain>cv. Columbia</strain>
    </source>
</reference>
<reference key="5">
    <citation type="submission" date="2002-03" db="EMBL/GenBank/DDBJ databases">
        <title>Full-length cDNA from Arabidopsis thaliana.</title>
        <authorList>
            <person name="Brover V.V."/>
            <person name="Troukhan M.E."/>
            <person name="Alexandrov N.A."/>
            <person name="Lu Y.-P."/>
            <person name="Flavell R.B."/>
            <person name="Feldmann K.A."/>
        </authorList>
    </citation>
    <scope>NUCLEOTIDE SEQUENCE [LARGE SCALE MRNA]</scope>
</reference>
<reference key="6">
    <citation type="journal article" date="2003" name="Plant Cell">
        <title>Enzymes of glycolysis are functionally associated with the mitochondrion in Arabidopsis cells.</title>
        <authorList>
            <person name="Giege P."/>
            <person name="Heazlewood J.L."/>
            <person name="Roessner-Tunali U."/>
            <person name="Millar A.H."/>
            <person name="Fernie A.R."/>
            <person name="Leaver C.J."/>
            <person name="Sweetlove L.J."/>
        </authorList>
    </citation>
    <scope>IDENTIFICATION BY MASS SPECTROMETRY</scope>
    <scope>SUBCELLULAR LOCATION [LARGE SCALE ANALYSIS]</scope>
</reference>
<reference key="7">
    <citation type="journal article" date="2006" name="Proteomics">
        <title>The early responses of Arabidopsis thaliana cells to cadmium exposure explored by protein and metabolite profiling analyses.</title>
        <authorList>
            <person name="Sarry J.-E."/>
            <person name="Kuhn L."/>
            <person name="Ducruix C."/>
            <person name="Lafaye A."/>
            <person name="Junot C."/>
            <person name="Hugouvieux V."/>
            <person name="Jourdain A."/>
            <person name="Bastien O."/>
            <person name="Fievet J.B."/>
            <person name="Vailhen D."/>
            <person name="Amekraz B."/>
            <person name="Moulin C."/>
            <person name="Ezan E."/>
            <person name="Garin J."/>
            <person name="Bourguignon J."/>
        </authorList>
    </citation>
    <scope>INDUCTION BY CADMIUM</scope>
    <source>
        <strain>cv. Columbia</strain>
    </source>
</reference>
<reference key="8">
    <citation type="journal article" date="2011" name="Plant Physiol. Biochem.">
        <title>Regulation of plant cytosolic aldolase functions by redox-modifications.</title>
        <authorList>
            <person name="van der Linde K."/>
            <person name="Gutsche N."/>
            <person name="Leffers H.M."/>
            <person name="Lindermayr C."/>
            <person name="Mueller B."/>
            <person name="Holtgrefe S."/>
            <person name="Scheibe R."/>
        </authorList>
    </citation>
    <scope>FUNCTION</scope>
    <scope>CATALYTIC ACTIVITY</scope>
    <scope>ACTIVITY REGULATION</scope>
    <scope>BIOPHYSICOCHEMICAL PROPERTIES</scope>
    <scope>INTERACTION WITH TRX1 AND TRX3</scope>
    <scope>SUBCELLULAR LOCATION</scope>
    <scope>IDENTIFICATION BY MASS SPECTROMETRY</scope>
    <scope>GLUTATHIONYLATION AT CYS-68 AND CYS-173</scope>
    <scope>S-NITROSYLATION AT CYS-173</scope>
</reference>
<reference key="9">
    <citation type="journal article" date="2012" name="Front. Plant Sci.">
        <title>Transfer of a redox-signal through the cytosol by redox-dependent microcompartmentation of glycolytic enzymes at mitochondria and actin cytoskeleton.</title>
        <authorList>
            <person name="Wojtera-Kwiczor J."/>
            <person name="Gross F."/>
            <person name="Leffers H.M."/>
            <person name="Kang M."/>
            <person name="Schneider M."/>
            <person name="Scheibe R."/>
        </authorList>
    </citation>
    <scope>FUNCTION</scope>
    <scope>INTERACTION WITH GAPC1 AND VDAC3</scope>
</reference>
<reference key="10">
    <citation type="journal article" date="2012" name="Gene">
        <title>Identification and characterization of fructose 1,6-bisphosphate aldolase genes in Arabidopsis reveal a gene family with diverse responses to abiotic stresses.</title>
        <authorList>
            <person name="Lu W."/>
            <person name="Tang X."/>
            <person name="Huo Y."/>
            <person name="Xu R."/>
            <person name="Qi S."/>
            <person name="Huang J."/>
            <person name="Zheng C."/>
            <person name="Wu C.A."/>
        </authorList>
    </citation>
    <scope>TISSUE SPECIFICITY</scope>
    <scope>INDUCTION</scope>
    <scope>GENE FAMILY</scope>
    <scope>NOMENCLATURE</scope>
    <scope>DISRUPTION PHENOTYPE</scope>
</reference>
<comment type="function">
    <text evidence="7 9">Fructose-bisphosphate aldolase that plays a key role in glycolysis and gluconeogenesis (PubMed:21782461). Associates with GAPC1 to the outer mitochondrial membrane, in a redox-dependent manner, leading to binding and bundling of actin. Actin binding and bundling occurs under oxidizing conditions and is reversible under reducing conditions. May be part of a redox-dependent retrograde signal transduction network for adaptation upon oxidative stress (PubMed:23316205).</text>
</comment>
<comment type="catalytic activity">
    <reaction evidence="7">
        <text>beta-D-fructose 1,6-bisphosphate = D-glyceraldehyde 3-phosphate + dihydroxyacetone phosphate</text>
        <dbReference type="Rhea" id="RHEA:14729"/>
        <dbReference type="ChEBI" id="CHEBI:32966"/>
        <dbReference type="ChEBI" id="CHEBI:57642"/>
        <dbReference type="ChEBI" id="CHEBI:59776"/>
        <dbReference type="EC" id="4.1.2.13"/>
    </reaction>
</comment>
<comment type="activity regulation">
    <text evidence="7">Total and irreversible inhibition by S-nitrosoglutathione (GSNO) (PubMed:21782461). Partial and reversible inhibition by oxidized glutathione (GSSG) (PubMed:21782461).</text>
</comment>
<comment type="biophysicochemical properties">
    <kinetics>
        <KM evidence="7">25 uM for fructose 1,6-bisphosphate</KM>
    </kinetics>
</comment>
<comment type="pathway">
    <text evidence="12">Carbohydrate degradation; glycolysis; D-glyceraldehyde 3-phosphate and glycerone phosphate from D-glucose: step 4/4.</text>
</comment>
<comment type="subunit">
    <text evidence="2 7 9">Homotetramer (By similarity). Interacts with TRX1 and TRX3 (PubMed:21782461). Interacts with GAPC1 and VDAC3 (PubMed:23316205).</text>
</comment>
<comment type="subcellular location">
    <subcellularLocation>
        <location evidence="7">Cytoplasm</location>
        <location evidence="7">Cytosol</location>
    </subcellularLocation>
    <subcellularLocation>
        <location evidence="7">Nucleus</location>
    </subcellularLocation>
    <subcellularLocation>
        <location evidence="5">Mitochondrion</location>
    </subcellularLocation>
</comment>
<comment type="alternative products">
    <event type="alternative splicing"/>
    <isoform>
        <id>Q9SJQ9-1</id>
        <name>1</name>
        <sequence type="displayed"/>
    </isoform>
    <text evidence="12">A number of isoforms are produced. According to EST sequences.</text>
</comment>
<comment type="tissue specificity">
    <text evidence="8">Expressed in roots, rosettes leaves, cauline leaves, stems and flowers.</text>
</comment>
<comment type="induction">
    <text evidence="6 8">By glucose, fructose and sucrose (PubMed:22561114). Induced by abiotic stresses (PubMed:22561114). Induced by cadmium (PubMed:16502469).</text>
</comment>
<comment type="PTM">
    <text evidence="7">S-glutathionylated at Cys-68 and Cys-173.</text>
</comment>
<comment type="PTM">
    <text evidence="7">S-nitrosylated at Cys-173.</text>
</comment>
<comment type="disruption phenotype">
    <text evidence="8">No visible phenotype under normal growth conditions, but mutant seeds have increased germination rate in presence of high salt or high mannitol, and decreased germination rate in presence of abscisic acid (ABA), glucose, fructose and sucrose.</text>
</comment>
<comment type="similarity">
    <text evidence="12">Belongs to the class I fructose-bisphosphate aldolase family.</text>
</comment>
<keyword id="KW-0002">3D-structure</keyword>
<keyword id="KW-0007">Acetylation</keyword>
<keyword id="KW-0025">Alternative splicing</keyword>
<keyword id="KW-0963">Cytoplasm</keyword>
<keyword id="KW-0318">Glutathionylation</keyword>
<keyword id="KW-0324">Glycolysis</keyword>
<keyword id="KW-0456">Lyase</keyword>
<keyword id="KW-0488">Methylation</keyword>
<keyword id="KW-0496">Mitochondrion</keyword>
<keyword id="KW-0539">Nucleus</keyword>
<keyword id="KW-0597">Phosphoprotein</keyword>
<keyword id="KW-1185">Reference proteome</keyword>
<keyword id="KW-0702">S-nitrosylation</keyword>
<keyword id="KW-0704">Schiff base</keyword>
<keyword id="KW-0346">Stress response</keyword>
<accession>Q9SJQ9</accession>
<organism>
    <name type="scientific">Arabidopsis thaliana</name>
    <name type="common">Mouse-ear cress</name>
    <dbReference type="NCBI Taxonomy" id="3702"/>
    <lineage>
        <taxon>Eukaryota</taxon>
        <taxon>Viridiplantae</taxon>
        <taxon>Streptophyta</taxon>
        <taxon>Embryophyta</taxon>
        <taxon>Tracheophyta</taxon>
        <taxon>Spermatophyta</taxon>
        <taxon>Magnoliopsida</taxon>
        <taxon>eudicotyledons</taxon>
        <taxon>Gunneridae</taxon>
        <taxon>Pentapetalae</taxon>
        <taxon>rosids</taxon>
        <taxon>malvids</taxon>
        <taxon>Brassicales</taxon>
        <taxon>Brassicaceae</taxon>
        <taxon>Camelineae</taxon>
        <taxon>Arabidopsis</taxon>
    </lineage>
</organism>
<protein>
    <recommendedName>
        <fullName evidence="12">Fructose-bisphosphate aldolase 6, cytosolic</fullName>
        <shortName evidence="11">AtFBA6</shortName>
        <ecNumber evidence="7">4.1.2.13</ecNumber>
    </recommendedName>
    <alternativeName>
        <fullName evidence="10">Cytosolic aldolase 2</fullName>
        <shortName evidence="10">cAld2</shortName>
    </alternativeName>
</protein>
<dbReference type="EC" id="4.1.2.13" evidence="7"/>
<dbReference type="EMBL" id="AC006919">
    <property type="protein sequence ID" value="AAD24630.1"/>
    <property type="molecule type" value="Genomic_DNA"/>
</dbReference>
<dbReference type="EMBL" id="CP002685">
    <property type="protein sequence ID" value="AEC09256.1"/>
    <property type="molecule type" value="Genomic_DNA"/>
</dbReference>
<dbReference type="EMBL" id="AY034897">
    <property type="protein sequence ID" value="AAK59404.1"/>
    <property type="molecule type" value="mRNA"/>
</dbReference>
<dbReference type="EMBL" id="AY063044">
    <property type="protein sequence ID" value="AAL34218.1"/>
    <property type="molecule type" value="mRNA"/>
</dbReference>
<dbReference type="EMBL" id="AK226842">
    <property type="protein sequence ID" value="BAE98935.1"/>
    <property type="molecule type" value="mRNA"/>
</dbReference>
<dbReference type="EMBL" id="AY085114">
    <property type="protein sequence ID" value="AAM61668.1"/>
    <property type="molecule type" value="mRNA"/>
</dbReference>
<dbReference type="PIR" id="A84781">
    <property type="entry name" value="A84781"/>
</dbReference>
<dbReference type="RefSeq" id="NP_181187.1">
    <molecule id="Q9SJQ9-1"/>
    <property type="nucleotide sequence ID" value="NM_129203.3"/>
</dbReference>
<dbReference type="PDB" id="6RNG">
    <property type="method" value="X-ray"/>
    <property type="resolution" value="2.15 A"/>
    <property type="chains" value="A/B/F/G=1-358"/>
</dbReference>
<dbReference type="PDB" id="6RS1">
    <property type="method" value="X-ray"/>
    <property type="resolution" value="1.90 A"/>
    <property type="chains" value="A/B/C/D=1-358"/>
</dbReference>
<dbReference type="PDBsum" id="6RNG"/>
<dbReference type="PDBsum" id="6RS1"/>
<dbReference type="SMR" id="Q9SJQ9"/>
<dbReference type="FunCoup" id="Q9SJQ9">
    <property type="interactions" value="1958"/>
</dbReference>
<dbReference type="IntAct" id="Q9SJQ9">
    <property type="interactions" value="1"/>
</dbReference>
<dbReference type="STRING" id="3702.Q9SJQ9"/>
<dbReference type="GlyGen" id="Q9SJQ9">
    <property type="glycosylation" value="1 site"/>
</dbReference>
<dbReference type="iPTMnet" id="Q9SJQ9"/>
<dbReference type="MetOSite" id="Q9SJQ9"/>
<dbReference type="SwissPalm" id="Q9SJQ9"/>
<dbReference type="PaxDb" id="3702-AT2G36460.1"/>
<dbReference type="ProteomicsDB" id="244903">
    <molecule id="Q9SJQ9-1"/>
</dbReference>
<dbReference type="EnsemblPlants" id="AT2G36460.1">
    <molecule id="Q9SJQ9-1"/>
    <property type="protein sequence ID" value="AT2G36460.1"/>
    <property type="gene ID" value="AT2G36460"/>
</dbReference>
<dbReference type="GeneID" id="818220"/>
<dbReference type="Gramene" id="AT2G36460.1">
    <molecule id="Q9SJQ9-1"/>
    <property type="protein sequence ID" value="AT2G36460.1"/>
    <property type="gene ID" value="AT2G36460"/>
</dbReference>
<dbReference type="KEGG" id="ath:AT2G36460"/>
<dbReference type="Araport" id="AT2G36460"/>
<dbReference type="TAIR" id="AT2G36460">
    <property type="gene designation" value="FBA6"/>
</dbReference>
<dbReference type="eggNOG" id="KOG1557">
    <property type="taxonomic scope" value="Eukaryota"/>
</dbReference>
<dbReference type="InParanoid" id="Q9SJQ9"/>
<dbReference type="OMA" id="CKGQYVT"/>
<dbReference type="OrthoDB" id="36455at2759"/>
<dbReference type="PhylomeDB" id="Q9SJQ9"/>
<dbReference type="BioCyc" id="ARA:AT2G36460-MONOMER"/>
<dbReference type="SABIO-RK" id="Q9SJQ9"/>
<dbReference type="UniPathway" id="UPA00109">
    <property type="reaction ID" value="UER00183"/>
</dbReference>
<dbReference type="PRO" id="PR:Q9SJQ9"/>
<dbReference type="Proteomes" id="UP000006548">
    <property type="component" value="Chromosome 2"/>
</dbReference>
<dbReference type="ExpressionAtlas" id="Q9SJQ9">
    <property type="expression patterns" value="baseline and differential"/>
</dbReference>
<dbReference type="GO" id="GO:0005829">
    <property type="term" value="C:cytosol"/>
    <property type="evidence" value="ECO:0007005"/>
    <property type="project" value="TAIR"/>
</dbReference>
<dbReference type="GO" id="GO:0005783">
    <property type="term" value="C:endoplasmic reticulum"/>
    <property type="evidence" value="ECO:0007005"/>
    <property type="project" value="TAIR"/>
</dbReference>
<dbReference type="GO" id="GO:0005739">
    <property type="term" value="C:mitochondrion"/>
    <property type="evidence" value="ECO:0000314"/>
    <property type="project" value="TAIR"/>
</dbReference>
<dbReference type="GO" id="GO:0005634">
    <property type="term" value="C:nucleus"/>
    <property type="evidence" value="ECO:0007669"/>
    <property type="project" value="UniProtKB-SubCell"/>
</dbReference>
<dbReference type="GO" id="GO:0005886">
    <property type="term" value="C:plasma membrane"/>
    <property type="evidence" value="ECO:0007005"/>
    <property type="project" value="TAIR"/>
</dbReference>
<dbReference type="GO" id="GO:0009506">
    <property type="term" value="C:plasmodesma"/>
    <property type="evidence" value="ECO:0007005"/>
    <property type="project" value="TAIR"/>
</dbReference>
<dbReference type="GO" id="GO:0005507">
    <property type="term" value="F:copper ion binding"/>
    <property type="evidence" value="ECO:0007005"/>
    <property type="project" value="TAIR"/>
</dbReference>
<dbReference type="GO" id="GO:0004332">
    <property type="term" value="F:fructose-bisphosphate aldolase activity"/>
    <property type="evidence" value="ECO:0000314"/>
    <property type="project" value="UniProtKB"/>
</dbReference>
<dbReference type="GO" id="GO:0003729">
    <property type="term" value="F:mRNA binding"/>
    <property type="evidence" value="ECO:0000314"/>
    <property type="project" value="TAIR"/>
</dbReference>
<dbReference type="GO" id="GO:1901149">
    <property type="term" value="F:salicylic acid binding"/>
    <property type="evidence" value="ECO:0007005"/>
    <property type="project" value="TAIR"/>
</dbReference>
<dbReference type="GO" id="GO:0071456">
    <property type="term" value="P:cellular response to hypoxia"/>
    <property type="evidence" value="ECO:0007007"/>
    <property type="project" value="TAIR"/>
</dbReference>
<dbReference type="GO" id="GO:0006094">
    <property type="term" value="P:gluconeogenesis"/>
    <property type="evidence" value="ECO:0000314"/>
    <property type="project" value="UniProtKB"/>
</dbReference>
<dbReference type="GO" id="GO:0006096">
    <property type="term" value="P:glycolytic process"/>
    <property type="evidence" value="ECO:0000314"/>
    <property type="project" value="UniProtKB"/>
</dbReference>
<dbReference type="GO" id="GO:0031930">
    <property type="term" value="P:mitochondria-nucleus signaling pathway"/>
    <property type="evidence" value="ECO:0000314"/>
    <property type="project" value="UniProtKB"/>
</dbReference>
<dbReference type="CDD" id="cd00948">
    <property type="entry name" value="FBP_aldolase_I_a"/>
    <property type="match status" value="1"/>
</dbReference>
<dbReference type="FunFam" id="3.20.20.70:FF:000068">
    <property type="entry name" value="Fructose-bisphosphate aldolase"/>
    <property type="match status" value="1"/>
</dbReference>
<dbReference type="Gene3D" id="3.20.20.70">
    <property type="entry name" value="Aldolase class I"/>
    <property type="match status" value="1"/>
</dbReference>
<dbReference type="InterPro" id="IPR029768">
    <property type="entry name" value="Aldolase_I_AS"/>
</dbReference>
<dbReference type="InterPro" id="IPR013785">
    <property type="entry name" value="Aldolase_TIM"/>
</dbReference>
<dbReference type="InterPro" id="IPR000741">
    <property type="entry name" value="FBA_I"/>
</dbReference>
<dbReference type="NCBIfam" id="NF033379">
    <property type="entry name" value="FrucBisAld_I"/>
    <property type="match status" value="1"/>
</dbReference>
<dbReference type="PANTHER" id="PTHR11627">
    <property type="entry name" value="FRUCTOSE-BISPHOSPHATE ALDOLASE"/>
    <property type="match status" value="1"/>
</dbReference>
<dbReference type="Pfam" id="PF00274">
    <property type="entry name" value="Glycolytic"/>
    <property type="match status" value="1"/>
</dbReference>
<dbReference type="SUPFAM" id="SSF51569">
    <property type="entry name" value="Aldolase"/>
    <property type="match status" value="1"/>
</dbReference>
<dbReference type="PROSITE" id="PS00158">
    <property type="entry name" value="ALDOLASE_CLASS_I"/>
    <property type="match status" value="1"/>
</dbReference>
<evidence type="ECO:0000250" key="1">
    <source>
        <dbReference type="UniProtKB" id="P00883"/>
    </source>
</evidence>
<evidence type="ECO:0000250" key="2">
    <source>
        <dbReference type="UniProtKB" id="Q944G9"/>
    </source>
</evidence>
<evidence type="ECO:0000250" key="3">
    <source>
        <dbReference type="UniProtKB" id="Q9LF98"/>
    </source>
</evidence>
<evidence type="ECO:0000250" key="4">
    <source>
        <dbReference type="UniProtKB" id="Q9SJU4"/>
    </source>
</evidence>
<evidence type="ECO:0000269" key="5">
    <source>
    </source>
</evidence>
<evidence type="ECO:0000269" key="6">
    <source>
    </source>
</evidence>
<evidence type="ECO:0000269" key="7">
    <source>
    </source>
</evidence>
<evidence type="ECO:0000269" key="8">
    <source>
    </source>
</evidence>
<evidence type="ECO:0000269" key="9">
    <source>
    </source>
</evidence>
<evidence type="ECO:0000303" key="10">
    <source>
    </source>
</evidence>
<evidence type="ECO:0000303" key="11">
    <source>
    </source>
</evidence>
<evidence type="ECO:0000305" key="12"/>
<evidence type="ECO:0000312" key="13">
    <source>
        <dbReference type="Araport" id="AT2G36460"/>
    </source>
</evidence>
<evidence type="ECO:0007829" key="14">
    <source>
        <dbReference type="PDB" id="6RNG"/>
    </source>
</evidence>
<evidence type="ECO:0007829" key="15">
    <source>
        <dbReference type="PDB" id="6RS1"/>
    </source>
</evidence>